<reference key="1">
    <citation type="submission" date="2006-09" db="EMBL/GenBank/DDBJ databases">
        <title>NISC comparative sequencing initiative.</title>
        <authorList>
            <person name="Antonellis A."/>
            <person name="Ayele K."/>
            <person name="Benjamin B."/>
            <person name="Blakesley R.W."/>
            <person name="Boakye A."/>
            <person name="Bouffard G.G."/>
            <person name="Brinkley C."/>
            <person name="Brooks S."/>
            <person name="Chu G."/>
            <person name="Coleman H."/>
            <person name="Engle J."/>
            <person name="Gestole M."/>
            <person name="Greene A."/>
            <person name="Guan X."/>
            <person name="Gupta J."/>
            <person name="Haghighi P."/>
            <person name="Han J."/>
            <person name="Hansen N."/>
            <person name="Ho S.-L."/>
            <person name="Hu P."/>
            <person name="Hunter G."/>
            <person name="Hurle B."/>
            <person name="Idol J.R."/>
            <person name="Kwong P."/>
            <person name="Laric P."/>
            <person name="Larson S."/>
            <person name="Lee-Lin S.-Q."/>
            <person name="Legaspi R."/>
            <person name="Madden M."/>
            <person name="Maduro Q.L."/>
            <person name="Maduro V.B."/>
            <person name="Margulies E.H."/>
            <person name="Masiello C."/>
            <person name="Maskeri B."/>
            <person name="McDowell J."/>
            <person name="Mojidi H.A."/>
            <person name="Mullikin J.C."/>
            <person name="Oestreicher J.S."/>
            <person name="Park M."/>
            <person name="Portnoy M.E."/>
            <person name="Prasad A."/>
            <person name="Puri O."/>
            <person name="Reddix-Dugue N."/>
            <person name="Schandler K."/>
            <person name="Schueler M.G."/>
            <person name="Sison C."/>
            <person name="Stantripop S."/>
            <person name="Stephen E."/>
            <person name="Taye A."/>
            <person name="Thomas J.W."/>
            <person name="Thomas P.J."/>
            <person name="Tsipouri V."/>
            <person name="Ung L."/>
            <person name="Vogt J.L."/>
            <person name="Wetherby K.D."/>
            <person name="Young A."/>
            <person name="Green E.D."/>
        </authorList>
    </citation>
    <scope>NUCLEOTIDE SEQUENCE [LARGE SCALE GENOMIC DNA]</scope>
</reference>
<gene>
    <name type="primary">CAV2</name>
</gene>
<evidence type="ECO:0000250" key="1"/>
<evidence type="ECO:0000250" key="2">
    <source>
        <dbReference type="UniProtKB" id="P51636"/>
    </source>
</evidence>
<evidence type="ECO:0000250" key="3">
    <source>
        <dbReference type="UniProtKB" id="Q9WVC3"/>
    </source>
</evidence>
<evidence type="ECO:0000255" key="4"/>
<evidence type="ECO:0000305" key="5"/>
<comment type="function">
    <text evidence="1">May act as a scaffolding protein within caveolar membranes. Interacts directly with G-protein alpha subunits and can functionally regulate their activity. Acts as an accessory protein in conjunction with CAV1 in targeting to lipid rafts and driving caveolae formation. Positive regulator of cellular mitogenesis of the MAPK signaling pathway. Required for the insulin-stimulated nuclear translocation and activation of MAPK1 and STAT3, and the subsequent regulation of cell cycle progression (By similarity).</text>
</comment>
<comment type="subunit">
    <text evidence="1">Monomer or homodimer (By similarity). Interacts with CAV1; the interaction forms a stable heterooligomeric complex that is required for targeting to lipid rafts and for caveolae formation. Tyrosine phosphorylated forms do not form heterooligomers with the Tyr-19-phosphorylated form existing as a monomer or dimer, and the Tyr-27-form as a monomer only. Interacts (tyrosine phosphorylated form) with the SH2 domain-containing proteins, RASA1, NCK1 and SRC. Interacts (tyrosine phosphorylated form) with INSR, the interaction (Tyr-27-phosphorylated form) is increased on insulin stimulation. Interacts (Tyr-19 phosphorylated form) with MAPK1 (phosphorylated form); the interaction, promoted by insulin, leads to nuclear location and MAPK1 activation. Interacts with STAT3; the interaction is increased on insulin-induced tyrosine phosphorylation leading to STAT activation (By similarity).</text>
</comment>
<comment type="subcellular location">
    <subcellularLocation>
        <location evidence="1">Nucleus</location>
    </subcellularLocation>
    <subcellularLocation>
        <location evidence="1">Cytoplasm</location>
    </subcellularLocation>
    <subcellularLocation>
        <location>Golgi apparatus membrane</location>
        <topology>Peripheral membrane protein</topology>
    </subcellularLocation>
    <subcellularLocation>
        <location>Cell membrane</location>
        <topology>Peripheral membrane protein</topology>
    </subcellularLocation>
    <subcellularLocation>
        <location>Membrane</location>
        <location>Caveola</location>
        <topology>Peripheral membrane protein</topology>
    </subcellularLocation>
    <text evidence="1">Potential hairpin-like structure in the membrane. Membrane protein of caveolae. Tyr-19-phosphorylated form is enriched at sites of cell-cell contact and is translocated to the nucleus in complex with MAPK1 in response to insulin. Tyr-27-phosphorylated form is located both in the cytoplasm and plasma membrane. CAV1-mediated Ser-23-phosphorylated form locates to the plasma membrane (By similarity).</text>
</comment>
<comment type="PTM">
    <text evidence="1">Phosphorylated on serine and tyrosine residues. CAV1 promotes phosphorylation on Ser-23 which then targets the complex to the plasma membrane, lipid rafts and caveolae. Phosphorylation on both Tyr-19 and Tyr-27 is required for insulin-induced 'Ser-727' phosphorylation of STAT3 and its activation. Phosphorylation on Tyr-19 is required for insulin-induced phosphorylation of MAPK1 and DNA binding of STAT3. Tyrosine phosphorylation is induced by both EGF and insulin (By similarity).</text>
</comment>
<comment type="similarity">
    <text evidence="5">Belongs to the caveolin family.</text>
</comment>
<protein>
    <recommendedName>
        <fullName>Caveolin-2</fullName>
    </recommendedName>
</protein>
<keyword id="KW-1003">Cell membrane</keyword>
<keyword id="KW-0963">Cytoplasm</keyword>
<keyword id="KW-0333">Golgi apparatus</keyword>
<keyword id="KW-0472">Membrane</keyword>
<keyword id="KW-0539">Nucleus</keyword>
<keyword id="KW-0597">Phosphoprotein</keyword>
<keyword id="KW-1185">Reference proteome</keyword>
<dbReference type="EMBL" id="DP000179">
    <property type="protein sequence ID" value="ABI75289.1"/>
    <property type="molecule type" value="Genomic_DNA"/>
</dbReference>
<dbReference type="RefSeq" id="NP_001182239.1">
    <property type="nucleotide sequence ID" value="NM_001195310.1"/>
</dbReference>
<dbReference type="SMR" id="Q09YJ1"/>
<dbReference type="STRING" id="9940.ENSOARP00000001437"/>
<dbReference type="PaxDb" id="9940-ENSOARP00000001437"/>
<dbReference type="Ensembl" id="ENSOART00025006390">
    <property type="protein sequence ID" value="ENSOARP00025003139"/>
    <property type="gene ID" value="ENSOARG00025003880"/>
</dbReference>
<dbReference type="GeneID" id="100126571"/>
<dbReference type="KEGG" id="oas:100126571"/>
<dbReference type="CTD" id="858"/>
<dbReference type="eggNOG" id="ENOG502RZYX">
    <property type="taxonomic scope" value="Eukaryota"/>
</dbReference>
<dbReference type="HOGENOM" id="CLU_102582_2_0_1"/>
<dbReference type="OMA" id="TRIFMDD"/>
<dbReference type="OrthoDB" id="5917823at2759"/>
<dbReference type="Proteomes" id="UP000002356">
    <property type="component" value="Chromosome 4"/>
</dbReference>
<dbReference type="Bgee" id="ENSOARG00000001379">
    <property type="expression patterns" value="Expressed in mitral valve and 51 other cell types or tissues"/>
</dbReference>
<dbReference type="GO" id="GO:0002080">
    <property type="term" value="C:acrosomal membrane"/>
    <property type="evidence" value="ECO:0007669"/>
    <property type="project" value="Ensembl"/>
</dbReference>
<dbReference type="GO" id="GO:0005901">
    <property type="term" value="C:caveola"/>
    <property type="evidence" value="ECO:0000250"/>
    <property type="project" value="UniProtKB"/>
</dbReference>
<dbReference type="GO" id="GO:0002095">
    <property type="term" value="C:caveolar macromolecular signaling complex"/>
    <property type="evidence" value="ECO:0007669"/>
    <property type="project" value="Ensembl"/>
</dbReference>
<dbReference type="GO" id="GO:0005925">
    <property type="term" value="C:focal adhesion"/>
    <property type="evidence" value="ECO:0007669"/>
    <property type="project" value="Ensembl"/>
</dbReference>
<dbReference type="GO" id="GO:0000139">
    <property type="term" value="C:Golgi membrane"/>
    <property type="evidence" value="ECO:0007669"/>
    <property type="project" value="UniProtKB-SubCell"/>
</dbReference>
<dbReference type="GO" id="GO:0005634">
    <property type="term" value="C:nucleus"/>
    <property type="evidence" value="ECO:0007669"/>
    <property type="project" value="UniProtKB-SubCell"/>
</dbReference>
<dbReference type="GO" id="GO:0048471">
    <property type="term" value="C:perinuclear region of cytoplasm"/>
    <property type="evidence" value="ECO:0000250"/>
    <property type="project" value="UniProtKB"/>
</dbReference>
<dbReference type="GO" id="GO:0044853">
    <property type="term" value="C:plasma membrane raft"/>
    <property type="evidence" value="ECO:0000250"/>
    <property type="project" value="UniProtKB"/>
</dbReference>
<dbReference type="GO" id="GO:0042383">
    <property type="term" value="C:sarcolemma"/>
    <property type="evidence" value="ECO:0007669"/>
    <property type="project" value="TreeGrafter"/>
</dbReference>
<dbReference type="GO" id="GO:0030133">
    <property type="term" value="C:transport vesicle"/>
    <property type="evidence" value="ECO:0007669"/>
    <property type="project" value="Ensembl"/>
</dbReference>
<dbReference type="GO" id="GO:0031748">
    <property type="term" value="F:D1 dopamine receptor binding"/>
    <property type="evidence" value="ECO:0000250"/>
    <property type="project" value="UniProtKB"/>
</dbReference>
<dbReference type="GO" id="GO:0046982">
    <property type="term" value="F:protein heterodimerization activity"/>
    <property type="evidence" value="ECO:0007669"/>
    <property type="project" value="Ensembl"/>
</dbReference>
<dbReference type="GO" id="GO:0042803">
    <property type="term" value="F:protein homodimerization activity"/>
    <property type="evidence" value="ECO:0007669"/>
    <property type="project" value="Ensembl"/>
</dbReference>
<dbReference type="GO" id="GO:0019901">
    <property type="term" value="F:protein kinase binding"/>
    <property type="evidence" value="ECO:0007669"/>
    <property type="project" value="Ensembl"/>
</dbReference>
<dbReference type="GO" id="GO:0030674">
    <property type="term" value="F:protein-macromolecule adaptor activity"/>
    <property type="evidence" value="ECO:0007669"/>
    <property type="project" value="Ensembl"/>
</dbReference>
<dbReference type="GO" id="GO:0097110">
    <property type="term" value="F:scaffold protein binding"/>
    <property type="evidence" value="ECO:0007669"/>
    <property type="project" value="Ensembl"/>
</dbReference>
<dbReference type="GO" id="GO:0071711">
    <property type="term" value="P:basement membrane organization"/>
    <property type="evidence" value="ECO:0007669"/>
    <property type="project" value="Ensembl"/>
</dbReference>
<dbReference type="GO" id="GO:0070836">
    <property type="term" value="P:caveola assembly"/>
    <property type="evidence" value="ECO:0000250"/>
    <property type="project" value="UniProtKB"/>
</dbReference>
<dbReference type="GO" id="GO:0007029">
    <property type="term" value="P:endoplasmic reticulum organization"/>
    <property type="evidence" value="ECO:0000250"/>
    <property type="project" value="UniProtKB"/>
</dbReference>
<dbReference type="GO" id="GO:0001935">
    <property type="term" value="P:endothelial cell proliferation"/>
    <property type="evidence" value="ECO:0007669"/>
    <property type="project" value="Ensembl"/>
</dbReference>
<dbReference type="GO" id="GO:0008286">
    <property type="term" value="P:insulin receptor signaling pathway"/>
    <property type="evidence" value="ECO:0007669"/>
    <property type="project" value="Ensembl"/>
</dbReference>
<dbReference type="GO" id="GO:0007005">
    <property type="term" value="P:mitochondrion organization"/>
    <property type="evidence" value="ECO:0000250"/>
    <property type="project" value="UniProtKB"/>
</dbReference>
<dbReference type="GO" id="GO:0001937">
    <property type="term" value="P:negative regulation of endothelial cell proliferation"/>
    <property type="evidence" value="ECO:0000250"/>
    <property type="project" value="UniProtKB"/>
</dbReference>
<dbReference type="GO" id="GO:0014859">
    <property type="term" value="P:negative regulation of skeletal muscle cell proliferation"/>
    <property type="evidence" value="ECO:0007669"/>
    <property type="project" value="Ensembl"/>
</dbReference>
<dbReference type="GO" id="GO:0030512">
    <property type="term" value="P:negative regulation of transforming growth factor beta receptor signaling pathway"/>
    <property type="evidence" value="ECO:0007669"/>
    <property type="project" value="Ensembl"/>
</dbReference>
<dbReference type="GO" id="GO:0044794">
    <property type="term" value="P:positive regulation by host of viral process"/>
    <property type="evidence" value="ECO:0007669"/>
    <property type="project" value="Ensembl"/>
</dbReference>
<dbReference type="GO" id="GO:0060161">
    <property type="term" value="P:positive regulation of dopamine receptor signaling pathway"/>
    <property type="evidence" value="ECO:0000250"/>
    <property type="project" value="UniProtKB"/>
</dbReference>
<dbReference type="GO" id="GO:0001938">
    <property type="term" value="P:positive regulation of endothelial cell proliferation"/>
    <property type="evidence" value="ECO:0007669"/>
    <property type="project" value="Ensembl"/>
</dbReference>
<dbReference type="GO" id="GO:0043410">
    <property type="term" value="P:positive regulation of MAPK cascade"/>
    <property type="evidence" value="ECO:0007669"/>
    <property type="project" value="Ensembl"/>
</dbReference>
<dbReference type="GO" id="GO:0019065">
    <property type="term" value="P:receptor-mediated endocytosis of virus by host cell"/>
    <property type="evidence" value="ECO:0007669"/>
    <property type="project" value="Ensembl"/>
</dbReference>
<dbReference type="GO" id="GO:0051480">
    <property type="term" value="P:regulation of cytosolic calcium ion concentration"/>
    <property type="evidence" value="ECO:0007669"/>
    <property type="project" value="TreeGrafter"/>
</dbReference>
<dbReference type="GO" id="GO:0007088">
    <property type="term" value="P:regulation of mitotic nuclear division"/>
    <property type="evidence" value="ECO:0007669"/>
    <property type="project" value="Ensembl"/>
</dbReference>
<dbReference type="GO" id="GO:0014856">
    <property type="term" value="P:skeletal muscle cell proliferation"/>
    <property type="evidence" value="ECO:0007669"/>
    <property type="project" value="Ensembl"/>
</dbReference>
<dbReference type="GO" id="GO:0048741">
    <property type="term" value="P:skeletal muscle fiber development"/>
    <property type="evidence" value="ECO:0000250"/>
    <property type="project" value="UniProtKB"/>
</dbReference>
<dbReference type="GO" id="GO:0007179">
    <property type="term" value="P:transforming growth factor beta receptor signaling pathway"/>
    <property type="evidence" value="ECO:0007669"/>
    <property type="project" value="Ensembl"/>
</dbReference>
<dbReference type="GO" id="GO:0048278">
    <property type="term" value="P:vesicle docking"/>
    <property type="evidence" value="ECO:0000250"/>
    <property type="project" value="UniProtKB"/>
</dbReference>
<dbReference type="GO" id="GO:0006906">
    <property type="term" value="P:vesicle fusion"/>
    <property type="evidence" value="ECO:0000250"/>
    <property type="project" value="UniProtKB"/>
</dbReference>
<dbReference type="GO" id="GO:0019076">
    <property type="term" value="P:viral release from host cell"/>
    <property type="evidence" value="ECO:0007669"/>
    <property type="project" value="Ensembl"/>
</dbReference>
<dbReference type="InterPro" id="IPR001612">
    <property type="entry name" value="Caveolin"/>
</dbReference>
<dbReference type="InterPro" id="IPR018361">
    <property type="entry name" value="Caveolin_CS"/>
</dbReference>
<dbReference type="PANTHER" id="PTHR10844">
    <property type="entry name" value="CAVEOLIN"/>
    <property type="match status" value="1"/>
</dbReference>
<dbReference type="PANTHER" id="PTHR10844:SF3">
    <property type="entry name" value="CAVEOLIN-2"/>
    <property type="match status" value="1"/>
</dbReference>
<dbReference type="Pfam" id="PF01146">
    <property type="entry name" value="Caveolin"/>
    <property type="match status" value="1"/>
</dbReference>
<dbReference type="PROSITE" id="PS01210">
    <property type="entry name" value="CAVEOLIN"/>
    <property type="match status" value="1"/>
</dbReference>
<proteinExistence type="inferred from homology"/>
<sequence length="162" mass="18146">MGLETEKADVQLFMDDDSYSRHSSVDYADPDKFVDPGSDRDPHRLNSHLKVGFEDVIAEPVSTHSFDKVWICSHALFEMSKYVIYKFLTVFLAIPLAFAAGILFATLSCLHIWIIMPFVKTCLMVLPSVQTIWKSVTDVVIAPLCTSVGRSFSSVSLQLSHD</sequence>
<name>CAV2_SHEEP</name>
<organism>
    <name type="scientific">Ovis aries</name>
    <name type="common">Sheep</name>
    <dbReference type="NCBI Taxonomy" id="9940"/>
    <lineage>
        <taxon>Eukaryota</taxon>
        <taxon>Metazoa</taxon>
        <taxon>Chordata</taxon>
        <taxon>Craniata</taxon>
        <taxon>Vertebrata</taxon>
        <taxon>Euteleostomi</taxon>
        <taxon>Mammalia</taxon>
        <taxon>Eutheria</taxon>
        <taxon>Laurasiatheria</taxon>
        <taxon>Artiodactyla</taxon>
        <taxon>Ruminantia</taxon>
        <taxon>Pecora</taxon>
        <taxon>Bovidae</taxon>
        <taxon>Caprinae</taxon>
        <taxon>Ovis</taxon>
    </lineage>
</organism>
<feature type="chain" id="PRO_0000260384" description="Caveolin-2">
    <location>
        <begin position="1"/>
        <end position="162"/>
    </location>
</feature>
<feature type="topological domain" description="Cytoplasmic" evidence="4">
    <location>
        <begin position="1"/>
        <end position="86"/>
    </location>
</feature>
<feature type="intramembrane region" description="Helical" evidence="4">
    <location>
        <begin position="87"/>
        <end position="107"/>
    </location>
</feature>
<feature type="topological domain" description="Cytoplasmic" evidence="4">
    <location>
        <begin position="108"/>
        <end position="162"/>
    </location>
</feature>
<feature type="modified residue" description="Phosphotyrosine; by SRC" evidence="2">
    <location>
        <position position="19"/>
    </location>
</feature>
<feature type="modified residue" description="Phosphoserine" evidence="3">
    <location>
        <position position="20"/>
    </location>
</feature>
<feature type="modified residue" description="Phosphoserine" evidence="2">
    <location>
        <position position="23"/>
    </location>
</feature>
<feature type="modified residue" description="Phosphotyrosine; by SRC" evidence="2">
    <location>
        <position position="27"/>
    </location>
</feature>
<accession>Q09YJ1</accession>